<accession>P0CI55</accession>
<comment type="function">
    <text evidence="1">Binds voltage-independently at site-3 of voltage-gated sodium channels (Nav) and inhibits the inactivation of the activated channels, thereby blocking neuronal transmission.</text>
</comment>
<comment type="subcellular location">
    <subcellularLocation>
        <location evidence="1">Secreted</location>
    </subcellularLocation>
</comment>
<comment type="tissue specificity">
    <text>Expressed by the venom gland.</text>
</comment>
<comment type="domain">
    <text evidence="3">Has the structural arrangement of an alpha-helix connected to antiparallel beta-sheets by disulfide bonds (CS-alpha/beta).</text>
</comment>
<comment type="similarity">
    <text evidence="3">Belongs to the long (4 C-C) scorpion toxin superfamily. Sodium channel inhibitor family. Alpha subfamily.</text>
</comment>
<protein>
    <recommendedName>
        <fullName>Neurotoxin LmNaTx35.2</fullName>
    </recommendedName>
</protein>
<feature type="signal peptide" evidence="1">
    <location>
        <begin position="1"/>
        <end position="21"/>
    </location>
</feature>
<feature type="chain" id="PRO_0000403815" description="Neurotoxin LmNaTx35.2">
    <location>
        <begin position="22"/>
        <end position="86"/>
    </location>
</feature>
<feature type="domain" description="LCN-type CS-alpha/beta" evidence="2">
    <location>
        <begin position="22"/>
        <end position="85"/>
    </location>
</feature>
<feature type="disulfide bond" evidence="2">
    <location>
        <begin position="33"/>
        <end position="84"/>
    </location>
</feature>
<feature type="disulfide bond" evidence="2">
    <location>
        <begin position="37"/>
        <end position="60"/>
    </location>
</feature>
<feature type="disulfide bond" evidence="2">
    <location>
        <begin position="46"/>
        <end position="65"/>
    </location>
</feature>
<feature type="disulfide bond" evidence="2">
    <location>
        <begin position="50"/>
        <end position="67"/>
    </location>
</feature>
<proteinExistence type="evidence at transcript level"/>
<keyword id="KW-1015">Disulfide bond</keyword>
<keyword id="KW-0872">Ion channel impairing toxin</keyword>
<keyword id="KW-0528">Neurotoxin</keyword>
<keyword id="KW-0964">Secreted</keyword>
<keyword id="KW-0732">Signal</keyword>
<keyword id="KW-0800">Toxin</keyword>
<keyword id="KW-0738">Voltage-gated sodium channel impairing toxin</keyword>
<name>SNAZ2_LYCMC</name>
<reference key="1">
    <citation type="journal article" date="2010" name="BMC Genomics">
        <title>Comparative venom gland transcriptome analysis of the scorpion Lychas mucronatus reveals intraspecific toxic gene diversity and new venomous components.</title>
        <authorList>
            <person name="Zhao R."/>
            <person name="Ma Y."/>
            <person name="He Y."/>
            <person name="Di Z."/>
            <person name="Wu Y.-L."/>
            <person name="Cao Z.-J."/>
            <person name="Li W.-X."/>
        </authorList>
    </citation>
    <scope>NUCLEOTIDE SEQUENCE [MRNA]</scope>
    <source>
        <strain>Yunnan</strain>
        <tissue>Venom gland</tissue>
    </source>
</reference>
<organism>
    <name type="scientific">Lychas mucronatus</name>
    <name type="common">Chinese swimming scorpion</name>
    <dbReference type="NCBI Taxonomy" id="172552"/>
    <lineage>
        <taxon>Eukaryota</taxon>
        <taxon>Metazoa</taxon>
        <taxon>Ecdysozoa</taxon>
        <taxon>Arthropoda</taxon>
        <taxon>Chelicerata</taxon>
        <taxon>Arachnida</taxon>
        <taxon>Scorpiones</taxon>
        <taxon>Buthida</taxon>
        <taxon>Buthoidea</taxon>
        <taxon>Buthidae</taxon>
        <taxon>Lychas</taxon>
    </lineage>
</organism>
<sequence>MQLKIQLLMLVLMTVLTGVLGKDGYVVHEDTNCKYSCDVFKKWKYCSPLCQKKGAETGYCYSFACWCVGLPEETLVYGDKGTYCWE</sequence>
<evidence type="ECO:0000250" key="1"/>
<evidence type="ECO:0000255" key="2">
    <source>
        <dbReference type="PROSITE-ProRule" id="PRU01210"/>
    </source>
</evidence>
<evidence type="ECO:0000305" key="3"/>
<dbReference type="EMBL" id="GT028836">
    <property type="status" value="NOT_ANNOTATED_CDS"/>
    <property type="molecule type" value="mRNA"/>
</dbReference>
<dbReference type="SMR" id="P0CI55"/>
<dbReference type="GO" id="GO:0005576">
    <property type="term" value="C:extracellular region"/>
    <property type="evidence" value="ECO:0007669"/>
    <property type="project" value="UniProtKB-SubCell"/>
</dbReference>
<dbReference type="GO" id="GO:0019871">
    <property type="term" value="F:sodium channel inhibitor activity"/>
    <property type="evidence" value="ECO:0007669"/>
    <property type="project" value="InterPro"/>
</dbReference>
<dbReference type="GO" id="GO:0090729">
    <property type="term" value="F:toxin activity"/>
    <property type="evidence" value="ECO:0007669"/>
    <property type="project" value="UniProtKB-KW"/>
</dbReference>
<dbReference type="GO" id="GO:0006952">
    <property type="term" value="P:defense response"/>
    <property type="evidence" value="ECO:0007669"/>
    <property type="project" value="InterPro"/>
</dbReference>
<dbReference type="CDD" id="cd23106">
    <property type="entry name" value="neurotoxins_LC_scorpion"/>
    <property type="match status" value="1"/>
</dbReference>
<dbReference type="Gene3D" id="3.30.30.10">
    <property type="entry name" value="Knottin, scorpion toxin-like"/>
    <property type="match status" value="1"/>
</dbReference>
<dbReference type="InterPro" id="IPR044062">
    <property type="entry name" value="LCN-type_CS_alpha_beta_dom"/>
</dbReference>
<dbReference type="InterPro" id="IPR003614">
    <property type="entry name" value="Scorpion_toxin-like"/>
</dbReference>
<dbReference type="InterPro" id="IPR036574">
    <property type="entry name" value="Scorpion_toxin-like_sf"/>
</dbReference>
<dbReference type="InterPro" id="IPR018218">
    <property type="entry name" value="Scorpion_toxinL"/>
</dbReference>
<dbReference type="InterPro" id="IPR002061">
    <property type="entry name" value="Scorpion_toxinL/defensin"/>
</dbReference>
<dbReference type="Pfam" id="PF00537">
    <property type="entry name" value="Toxin_3"/>
    <property type="match status" value="1"/>
</dbReference>
<dbReference type="PRINTS" id="PR00285">
    <property type="entry name" value="SCORPNTOXIN"/>
</dbReference>
<dbReference type="SMART" id="SM00505">
    <property type="entry name" value="Knot1"/>
    <property type="match status" value="1"/>
</dbReference>
<dbReference type="SUPFAM" id="SSF57095">
    <property type="entry name" value="Scorpion toxin-like"/>
    <property type="match status" value="1"/>
</dbReference>
<dbReference type="PROSITE" id="PS51863">
    <property type="entry name" value="LCN_CSAB"/>
    <property type="match status" value="1"/>
</dbReference>